<organism>
    <name type="scientific">Escherichia coli O17:K52:H18 (strain UMN026 / ExPEC)</name>
    <dbReference type="NCBI Taxonomy" id="585056"/>
    <lineage>
        <taxon>Bacteria</taxon>
        <taxon>Pseudomonadati</taxon>
        <taxon>Pseudomonadota</taxon>
        <taxon>Gammaproteobacteria</taxon>
        <taxon>Enterobacterales</taxon>
        <taxon>Enterobacteriaceae</taxon>
        <taxon>Escherichia</taxon>
    </lineage>
</organism>
<evidence type="ECO:0000255" key="1">
    <source>
        <dbReference type="HAMAP-Rule" id="MF_00048"/>
    </source>
</evidence>
<evidence type="ECO:0000256" key="2">
    <source>
        <dbReference type="SAM" id="MobiDB-lite"/>
    </source>
</evidence>
<feature type="chain" id="PRO_1000200141" description="UPF0102 protein YraN">
    <location>
        <begin position="1"/>
        <end position="131"/>
    </location>
</feature>
<feature type="region of interest" description="Disordered" evidence="2">
    <location>
        <begin position="1"/>
        <end position="20"/>
    </location>
</feature>
<feature type="compositionally biased region" description="Polar residues" evidence="2">
    <location>
        <begin position="1"/>
        <end position="19"/>
    </location>
</feature>
<dbReference type="EMBL" id="CU928163">
    <property type="protein sequence ID" value="CAR14782.1"/>
    <property type="molecule type" value="Genomic_DNA"/>
</dbReference>
<dbReference type="RefSeq" id="WP_000246847.1">
    <property type="nucleotide sequence ID" value="NC_011751.1"/>
</dbReference>
<dbReference type="RefSeq" id="YP_002414287.1">
    <property type="nucleotide sequence ID" value="NC_011751.1"/>
</dbReference>
<dbReference type="SMR" id="B7NDD2"/>
<dbReference type="STRING" id="585056.ECUMN_3628"/>
<dbReference type="KEGG" id="eum:ECUMN_3628"/>
<dbReference type="PATRIC" id="fig|585056.7.peg.3808"/>
<dbReference type="HOGENOM" id="CLU_115353_1_0_6"/>
<dbReference type="Proteomes" id="UP000007097">
    <property type="component" value="Chromosome"/>
</dbReference>
<dbReference type="GO" id="GO:0003676">
    <property type="term" value="F:nucleic acid binding"/>
    <property type="evidence" value="ECO:0007669"/>
    <property type="project" value="InterPro"/>
</dbReference>
<dbReference type="CDD" id="cd20736">
    <property type="entry name" value="PoNe_Nuclease"/>
    <property type="match status" value="1"/>
</dbReference>
<dbReference type="Gene3D" id="3.40.1350.10">
    <property type="match status" value="1"/>
</dbReference>
<dbReference type="HAMAP" id="MF_00048">
    <property type="entry name" value="UPF0102"/>
    <property type="match status" value="1"/>
</dbReference>
<dbReference type="InterPro" id="IPR011335">
    <property type="entry name" value="Restrct_endonuc-II-like"/>
</dbReference>
<dbReference type="InterPro" id="IPR011856">
    <property type="entry name" value="tRNA_endonuc-like_dom_sf"/>
</dbReference>
<dbReference type="InterPro" id="IPR003509">
    <property type="entry name" value="UPF0102_YraN-like"/>
</dbReference>
<dbReference type="NCBIfam" id="NF009150">
    <property type="entry name" value="PRK12497.1-3"/>
    <property type="match status" value="1"/>
</dbReference>
<dbReference type="NCBIfam" id="TIGR00252">
    <property type="entry name" value="YraN family protein"/>
    <property type="match status" value="1"/>
</dbReference>
<dbReference type="PANTHER" id="PTHR34039">
    <property type="entry name" value="UPF0102 PROTEIN YRAN"/>
    <property type="match status" value="1"/>
</dbReference>
<dbReference type="PANTHER" id="PTHR34039:SF1">
    <property type="entry name" value="UPF0102 PROTEIN YRAN"/>
    <property type="match status" value="1"/>
</dbReference>
<dbReference type="Pfam" id="PF02021">
    <property type="entry name" value="UPF0102"/>
    <property type="match status" value="1"/>
</dbReference>
<dbReference type="SUPFAM" id="SSF52980">
    <property type="entry name" value="Restriction endonuclease-like"/>
    <property type="match status" value="1"/>
</dbReference>
<proteinExistence type="inferred from homology"/>
<comment type="similarity">
    <text evidence="1">Belongs to the UPF0102 family.</text>
</comment>
<accession>B7NDD2</accession>
<gene>
    <name evidence="1" type="primary">yraN</name>
    <name type="ordered locus">ECUMN_3628</name>
</gene>
<name>YRAN_ECOLU</name>
<protein>
    <recommendedName>
        <fullName evidence="1">UPF0102 protein YraN</fullName>
    </recommendedName>
</protein>
<sequence length="131" mass="14812">MATVPTRSGSPRQLTTKQTGDAWEVQARRWLEGKGLRFIAANVNERGGEIDLIMREGRTTVFVEVRYRRSALYGGAAASVTRSKQHKLLQTARLWLARHNGSFDTVDCRFDVVAFTGNEVEWIKDAFNDHS</sequence>
<reference key="1">
    <citation type="journal article" date="2009" name="PLoS Genet.">
        <title>Organised genome dynamics in the Escherichia coli species results in highly diverse adaptive paths.</title>
        <authorList>
            <person name="Touchon M."/>
            <person name="Hoede C."/>
            <person name="Tenaillon O."/>
            <person name="Barbe V."/>
            <person name="Baeriswyl S."/>
            <person name="Bidet P."/>
            <person name="Bingen E."/>
            <person name="Bonacorsi S."/>
            <person name="Bouchier C."/>
            <person name="Bouvet O."/>
            <person name="Calteau A."/>
            <person name="Chiapello H."/>
            <person name="Clermont O."/>
            <person name="Cruveiller S."/>
            <person name="Danchin A."/>
            <person name="Diard M."/>
            <person name="Dossat C."/>
            <person name="Karoui M.E."/>
            <person name="Frapy E."/>
            <person name="Garry L."/>
            <person name="Ghigo J.M."/>
            <person name="Gilles A.M."/>
            <person name="Johnson J."/>
            <person name="Le Bouguenec C."/>
            <person name="Lescat M."/>
            <person name="Mangenot S."/>
            <person name="Martinez-Jehanne V."/>
            <person name="Matic I."/>
            <person name="Nassif X."/>
            <person name="Oztas S."/>
            <person name="Petit M.A."/>
            <person name="Pichon C."/>
            <person name="Rouy Z."/>
            <person name="Ruf C.S."/>
            <person name="Schneider D."/>
            <person name="Tourret J."/>
            <person name="Vacherie B."/>
            <person name="Vallenet D."/>
            <person name="Medigue C."/>
            <person name="Rocha E.P.C."/>
            <person name="Denamur E."/>
        </authorList>
    </citation>
    <scope>NUCLEOTIDE SEQUENCE [LARGE SCALE GENOMIC DNA]</scope>
    <source>
        <strain>UMN026 / ExPEC</strain>
    </source>
</reference>